<reference key="1">
    <citation type="journal article" date="2008" name="Appl. Environ. Microbiol.">
        <title>The genome of Polaromonas sp. strain JS666: insights into the evolution of a hydrocarbon- and xenobiotic-degrading bacterium, and features of relevance to biotechnology.</title>
        <authorList>
            <person name="Mattes T.E."/>
            <person name="Alexander A.K."/>
            <person name="Richardson P.M."/>
            <person name="Munk A.C."/>
            <person name="Han C.S."/>
            <person name="Stothard P."/>
            <person name="Coleman N.V."/>
        </authorList>
    </citation>
    <scope>NUCLEOTIDE SEQUENCE [LARGE SCALE GENOMIC DNA]</scope>
    <source>
        <strain>JS666 / ATCC BAA-500</strain>
    </source>
</reference>
<sequence length="731" mass="79857">MSTEPNCPFSGNARKHTAAGAPSNADWWPNQLKLNILHQHSAMSDPMGEAFNYAQEFKSLDLEAVKKDLLALMTNSQDWWPADFGHYGPLFIRMAWHSAGTYRVSDGRGGAGSGNQRFAPLNSWPDNVNLDKARRLLWPVKQKYGRKLSWADLMILAGNVALESMGFKTFGFAGGREDIWEPEEDVYWGSENTWLDDKRYSGDRDLENPLGAVQMGLIYVNPEGPNGNPDPIAAARDIRETFARMAMNDEETVALIAGGHTFGKTHGAGDVKHVGPEPEAAGIEEQGLGWNSGFGTGKGGDTISSGLEVTWSTTPTKWGNNYFDNLFGYEWELTTSPAGAQQWKPKGDAGAGTVPDAHDPSKRHAPAMLTTDLSLRLDPAYEKISRRFHENPDQLADAFARAWFKLTHRDMGPLSRYLGPLVPKEQLLWQDPIPAVDHKLVDEQDIAALKTRILASGLSISQLVTTAWASAATFRGSDKRGGANGARIRLAPQKNWEVNQPAELAKVLQKLETIQKDFNSAQSGGKKVSLADLIVLGGCAAVEAAAKKAGQDVKVPFSPGRMDASQEQTDVDSFAVLEPAADGFRNYARKGLEGSAAELLVDKAQLMTLTAPEMTVLIGGLRALNANVGQSKHGVFTKQPETLTNDFFVNLLDMSTKWQKSATSEGVLEGRDRATGELKWTGTIVDLVFGSNSQLRALAEVYACSDSQKSFVRDFVAAWNKVMNLDRFDLA</sequence>
<accession>Q12FQ6</accession>
<evidence type="ECO:0000255" key="1">
    <source>
        <dbReference type="HAMAP-Rule" id="MF_01961"/>
    </source>
</evidence>
<evidence type="ECO:0000256" key="2">
    <source>
        <dbReference type="SAM" id="MobiDB-lite"/>
    </source>
</evidence>
<comment type="function">
    <text evidence="1">Bifunctional enzyme with both catalase and broad-spectrum peroxidase activity.</text>
</comment>
<comment type="catalytic activity">
    <reaction evidence="1">
        <text>H2O2 + AH2 = A + 2 H2O</text>
        <dbReference type="Rhea" id="RHEA:30275"/>
        <dbReference type="ChEBI" id="CHEBI:13193"/>
        <dbReference type="ChEBI" id="CHEBI:15377"/>
        <dbReference type="ChEBI" id="CHEBI:16240"/>
        <dbReference type="ChEBI" id="CHEBI:17499"/>
        <dbReference type="EC" id="1.11.1.21"/>
    </reaction>
</comment>
<comment type="catalytic activity">
    <reaction evidence="1">
        <text>2 H2O2 = O2 + 2 H2O</text>
        <dbReference type="Rhea" id="RHEA:20309"/>
        <dbReference type="ChEBI" id="CHEBI:15377"/>
        <dbReference type="ChEBI" id="CHEBI:15379"/>
        <dbReference type="ChEBI" id="CHEBI:16240"/>
        <dbReference type="EC" id="1.11.1.21"/>
    </reaction>
</comment>
<comment type="cofactor">
    <cofactor evidence="1">
        <name>heme b</name>
        <dbReference type="ChEBI" id="CHEBI:60344"/>
    </cofactor>
    <text evidence="1">Binds 1 heme b (iron(II)-protoporphyrin IX) group per dimer.</text>
</comment>
<comment type="subunit">
    <text evidence="1">Homodimer or homotetramer.</text>
</comment>
<comment type="PTM">
    <text evidence="1">Formation of the three residue Trp-Tyr-Met cross-link is important for the catalase, but not the peroxidase activity of the enzyme.</text>
</comment>
<comment type="similarity">
    <text evidence="1">Belongs to the peroxidase family. Peroxidase/catalase subfamily.</text>
</comment>
<gene>
    <name evidence="1" type="primary">katG</name>
    <name type="ordered locus">Bpro_0678</name>
</gene>
<dbReference type="EC" id="1.11.1.21" evidence="1"/>
<dbReference type="EMBL" id="CP000316">
    <property type="protein sequence ID" value="ABE42636.1"/>
    <property type="molecule type" value="Genomic_DNA"/>
</dbReference>
<dbReference type="RefSeq" id="WP_011481639.1">
    <property type="nucleotide sequence ID" value="NC_007948.1"/>
</dbReference>
<dbReference type="SMR" id="Q12FQ6"/>
<dbReference type="STRING" id="296591.Bpro_0678"/>
<dbReference type="PeroxiBase" id="2695">
    <property type="entry name" value="POsCP01"/>
</dbReference>
<dbReference type="KEGG" id="pol:Bpro_0678"/>
<dbReference type="eggNOG" id="COG0376">
    <property type="taxonomic scope" value="Bacteria"/>
</dbReference>
<dbReference type="HOGENOM" id="CLU_025424_2_0_4"/>
<dbReference type="OrthoDB" id="9759743at2"/>
<dbReference type="Proteomes" id="UP000001983">
    <property type="component" value="Chromosome"/>
</dbReference>
<dbReference type="GO" id="GO:0005829">
    <property type="term" value="C:cytosol"/>
    <property type="evidence" value="ECO:0007669"/>
    <property type="project" value="TreeGrafter"/>
</dbReference>
<dbReference type="GO" id="GO:0004096">
    <property type="term" value="F:catalase activity"/>
    <property type="evidence" value="ECO:0007669"/>
    <property type="project" value="UniProtKB-UniRule"/>
</dbReference>
<dbReference type="GO" id="GO:0020037">
    <property type="term" value="F:heme binding"/>
    <property type="evidence" value="ECO:0007669"/>
    <property type="project" value="InterPro"/>
</dbReference>
<dbReference type="GO" id="GO:0046872">
    <property type="term" value="F:metal ion binding"/>
    <property type="evidence" value="ECO:0007669"/>
    <property type="project" value="UniProtKB-KW"/>
</dbReference>
<dbReference type="GO" id="GO:0070301">
    <property type="term" value="P:cellular response to hydrogen peroxide"/>
    <property type="evidence" value="ECO:0007669"/>
    <property type="project" value="TreeGrafter"/>
</dbReference>
<dbReference type="GO" id="GO:0042744">
    <property type="term" value="P:hydrogen peroxide catabolic process"/>
    <property type="evidence" value="ECO:0007669"/>
    <property type="project" value="UniProtKB-KW"/>
</dbReference>
<dbReference type="CDD" id="cd00649">
    <property type="entry name" value="catalase_peroxidase_1"/>
    <property type="match status" value="1"/>
</dbReference>
<dbReference type="CDD" id="cd08200">
    <property type="entry name" value="catalase_peroxidase_2"/>
    <property type="match status" value="1"/>
</dbReference>
<dbReference type="FunFam" id="1.10.420.10:FF:000002">
    <property type="entry name" value="Catalase-peroxidase"/>
    <property type="match status" value="1"/>
</dbReference>
<dbReference type="FunFam" id="1.10.420.10:FF:000004">
    <property type="entry name" value="Catalase-peroxidase"/>
    <property type="match status" value="1"/>
</dbReference>
<dbReference type="FunFam" id="1.10.520.10:FF:000002">
    <property type="entry name" value="Catalase-peroxidase"/>
    <property type="match status" value="1"/>
</dbReference>
<dbReference type="FunFam" id="1.10.520.10:FF:000004">
    <property type="entry name" value="Catalase-peroxidase"/>
    <property type="match status" value="1"/>
</dbReference>
<dbReference type="Gene3D" id="1.10.520.10">
    <property type="match status" value="2"/>
</dbReference>
<dbReference type="Gene3D" id="1.10.420.10">
    <property type="entry name" value="Peroxidase, domain 2"/>
    <property type="match status" value="2"/>
</dbReference>
<dbReference type="HAMAP" id="MF_01961">
    <property type="entry name" value="Catal_peroxid"/>
    <property type="match status" value="1"/>
</dbReference>
<dbReference type="InterPro" id="IPR000763">
    <property type="entry name" value="Catalase_peroxidase"/>
</dbReference>
<dbReference type="InterPro" id="IPR002016">
    <property type="entry name" value="Haem_peroxidase"/>
</dbReference>
<dbReference type="InterPro" id="IPR010255">
    <property type="entry name" value="Haem_peroxidase_sf"/>
</dbReference>
<dbReference type="InterPro" id="IPR019794">
    <property type="entry name" value="Peroxidases_AS"/>
</dbReference>
<dbReference type="InterPro" id="IPR019793">
    <property type="entry name" value="Peroxidases_heam-ligand_BS"/>
</dbReference>
<dbReference type="NCBIfam" id="TIGR00198">
    <property type="entry name" value="cat_per_HPI"/>
    <property type="match status" value="1"/>
</dbReference>
<dbReference type="NCBIfam" id="NF011635">
    <property type="entry name" value="PRK15061.1"/>
    <property type="match status" value="1"/>
</dbReference>
<dbReference type="PANTHER" id="PTHR30555:SF0">
    <property type="entry name" value="CATALASE-PEROXIDASE"/>
    <property type="match status" value="1"/>
</dbReference>
<dbReference type="PANTHER" id="PTHR30555">
    <property type="entry name" value="HYDROPEROXIDASE I, BIFUNCTIONAL CATALASE-PEROXIDASE"/>
    <property type="match status" value="1"/>
</dbReference>
<dbReference type="Pfam" id="PF00141">
    <property type="entry name" value="peroxidase"/>
    <property type="match status" value="2"/>
</dbReference>
<dbReference type="PRINTS" id="PR00460">
    <property type="entry name" value="BPEROXIDASE"/>
</dbReference>
<dbReference type="PRINTS" id="PR00458">
    <property type="entry name" value="PEROXIDASE"/>
</dbReference>
<dbReference type="SUPFAM" id="SSF48113">
    <property type="entry name" value="Heme-dependent peroxidases"/>
    <property type="match status" value="2"/>
</dbReference>
<dbReference type="PROSITE" id="PS00435">
    <property type="entry name" value="PEROXIDASE_1"/>
    <property type="match status" value="1"/>
</dbReference>
<dbReference type="PROSITE" id="PS00436">
    <property type="entry name" value="PEROXIDASE_2"/>
    <property type="match status" value="1"/>
</dbReference>
<dbReference type="PROSITE" id="PS50873">
    <property type="entry name" value="PEROXIDASE_4"/>
    <property type="match status" value="1"/>
</dbReference>
<proteinExistence type="inferred from homology"/>
<name>KATG_POLSJ</name>
<feature type="chain" id="PRO_0000354859" description="Catalase-peroxidase">
    <location>
        <begin position="1"/>
        <end position="731"/>
    </location>
</feature>
<feature type="region of interest" description="Disordered" evidence="2">
    <location>
        <begin position="1"/>
        <end position="24"/>
    </location>
</feature>
<feature type="region of interest" description="Disordered" evidence="2">
    <location>
        <begin position="339"/>
        <end position="365"/>
    </location>
</feature>
<feature type="active site" description="Proton acceptor" evidence="1">
    <location>
        <position position="97"/>
    </location>
</feature>
<feature type="binding site" description="axial binding residue" evidence="1">
    <location>
        <position position="260"/>
    </location>
    <ligand>
        <name>heme b</name>
        <dbReference type="ChEBI" id="CHEBI:60344"/>
    </ligand>
    <ligandPart>
        <name>Fe</name>
        <dbReference type="ChEBI" id="CHEBI:18248"/>
    </ligandPart>
</feature>
<feature type="site" description="Transition state stabilizer" evidence="1">
    <location>
        <position position="93"/>
    </location>
</feature>
<feature type="cross-link" description="Tryptophyl-tyrosyl-methioninium (Trp-Tyr) (with M-245)" evidence="1">
    <location>
        <begin position="96"/>
        <end position="219"/>
    </location>
</feature>
<feature type="cross-link" description="Tryptophyl-tyrosyl-methioninium (Tyr-Met) (with W-96)" evidence="1">
    <location>
        <begin position="219"/>
        <end position="245"/>
    </location>
</feature>
<keyword id="KW-0349">Heme</keyword>
<keyword id="KW-0376">Hydrogen peroxide</keyword>
<keyword id="KW-0408">Iron</keyword>
<keyword id="KW-0479">Metal-binding</keyword>
<keyword id="KW-0560">Oxidoreductase</keyword>
<keyword id="KW-0575">Peroxidase</keyword>
<keyword id="KW-1185">Reference proteome</keyword>
<protein>
    <recommendedName>
        <fullName evidence="1">Catalase-peroxidase</fullName>
        <shortName evidence="1">CP</shortName>
        <ecNumber evidence="1">1.11.1.21</ecNumber>
    </recommendedName>
    <alternativeName>
        <fullName evidence="1">Peroxidase/catalase</fullName>
    </alternativeName>
</protein>
<organism>
    <name type="scientific">Polaromonas sp. (strain JS666 / ATCC BAA-500)</name>
    <dbReference type="NCBI Taxonomy" id="296591"/>
    <lineage>
        <taxon>Bacteria</taxon>
        <taxon>Pseudomonadati</taxon>
        <taxon>Pseudomonadota</taxon>
        <taxon>Betaproteobacteria</taxon>
        <taxon>Burkholderiales</taxon>
        <taxon>Comamonadaceae</taxon>
        <taxon>Polaromonas</taxon>
    </lineage>
</organism>